<organism>
    <name type="scientific">Daucus carota</name>
    <name type="common">Wild carrot</name>
    <dbReference type="NCBI Taxonomy" id="4039"/>
    <lineage>
        <taxon>Eukaryota</taxon>
        <taxon>Viridiplantae</taxon>
        <taxon>Streptophyta</taxon>
        <taxon>Embryophyta</taxon>
        <taxon>Tracheophyta</taxon>
        <taxon>Spermatophyta</taxon>
        <taxon>Magnoliopsida</taxon>
        <taxon>eudicotyledons</taxon>
        <taxon>Gunneridae</taxon>
        <taxon>Pentapetalae</taxon>
        <taxon>asterids</taxon>
        <taxon>campanulids</taxon>
        <taxon>Apiales</taxon>
        <taxon>Apiaceae</taxon>
        <taxon>Apioideae</taxon>
        <taxon>Scandiceae</taxon>
        <taxon>Daucinae</taxon>
        <taxon>Daucus</taxon>
        <taxon>Daucus sect. Daucus</taxon>
    </lineage>
</organism>
<comment type="function">
    <text evidence="1">DNA-dependent RNA polymerase catalyzes the transcription of DNA into RNA using the four ribonucleoside triphosphates as substrates.</text>
</comment>
<comment type="catalytic activity">
    <reaction evidence="1">
        <text>RNA(n) + a ribonucleoside 5'-triphosphate = RNA(n+1) + diphosphate</text>
        <dbReference type="Rhea" id="RHEA:21248"/>
        <dbReference type="Rhea" id="RHEA-COMP:14527"/>
        <dbReference type="Rhea" id="RHEA-COMP:17342"/>
        <dbReference type="ChEBI" id="CHEBI:33019"/>
        <dbReference type="ChEBI" id="CHEBI:61557"/>
        <dbReference type="ChEBI" id="CHEBI:140395"/>
        <dbReference type="EC" id="2.7.7.6"/>
    </reaction>
</comment>
<comment type="cofactor">
    <cofactor evidence="1">
        <name>Zn(2+)</name>
        <dbReference type="ChEBI" id="CHEBI:29105"/>
    </cofactor>
    <text evidence="1">Binds 1 Zn(2+) ion per subunit.</text>
</comment>
<comment type="subunit">
    <text evidence="1">In plastids the minimal PEP RNA polymerase catalytic core is composed of four subunits: alpha, beta, beta', and beta''. When a (nuclear-encoded) sigma factor is associated with the core the holoenzyme is formed, which can initiate transcription.</text>
</comment>
<comment type="subcellular location">
    <subcellularLocation>
        <location evidence="1">Plastid</location>
        <location evidence="1">Chloroplast</location>
    </subcellularLocation>
</comment>
<comment type="similarity">
    <text evidence="1">Belongs to the RNA polymerase beta' chain family. RpoC2 subfamily.</text>
</comment>
<name>RPOC2_DAUCA</name>
<geneLocation type="chloroplast"/>
<feature type="chain" id="PRO_0000277188" description="DNA-directed RNA polymerase subunit beta''">
    <location>
        <begin position="1"/>
        <end position="1390"/>
    </location>
</feature>
<feature type="binding site" evidence="1">
    <location>
        <position position="224"/>
    </location>
    <ligand>
        <name>Zn(2+)</name>
        <dbReference type="ChEBI" id="CHEBI:29105"/>
    </ligand>
</feature>
<feature type="binding site" evidence="1">
    <location>
        <position position="295"/>
    </location>
    <ligand>
        <name>Zn(2+)</name>
        <dbReference type="ChEBI" id="CHEBI:29105"/>
    </ligand>
</feature>
<feature type="binding site" evidence="1">
    <location>
        <position position="302"/>
    </location>
    <ligand>
        <name>Zn(2+)</name>
        <dbReference type="ChEBI" id="CHEBI:29105"/>
    </ligand>
</feature>
<feature type="binding site" evidence="1">
    <location>
        <position position="305"/>
    </location>
    <ligand>
        <name>Zn(2+)</name>
        <dbReference type="ChEBI" id="CHEBI:29105"/>
    </ligand>
</feature>
<evidence type="ECO:0000255" key="1">
    <source>
        <dbReference type="HAMAP-Rule" id="MF_01324"/>
    </source>
</evidence>
<proteinExistence type="inferred from homology"/>
<accession>Q0G9X2</accession>
<dbReference type="EC" id="2.7.7.6" evidence="1"/>
<dbReference type="EMBL" id="DQ898156">
    <property type="protein sequence ID" value="ABI32414.1"/>
    <property type="molecule type" value="Genomic_DNA"/>
</dbReference>
<dbReference type="RefSeq" id="YP_740107.1">
    <property type="nucleotide sequence ID" value="NC_008325.1"/>
</dbReference>
<dbReference type="SMR" id="Q0G9X2"/>
<dbReference type="GeneID" id="4266717"/>
<dbReference type="GO" id="GO:0009507">
    <property type="term" value="C:chloroplast"/>
    <property type="evidence" value="ECO:0007669"/>
    <property type="project" value="UniProtKB-SubCell"/>
</dbReference>
<dbReference type="GO" id="GO:0000428">
    <property type="term" value="C:DNA-directed RNA polymerase complex"/>
    <property type="evidence" value="ECO:0007669"/>
    <property type="project" value="UniProtKB-KW"/>
</dbReference>
<dbReference type="GO" id="GO:0005739">
    <property type="term" value="C:mitochondrion"/>
    <property type="evidence" value="ECO:0007669"/>
    <property type="project" value="GOC"/>
</dbReference>
<dbReference type="GO" id="GO:0003677">
    <property type="term" value="F:DNA binding"/>
    <property type="evidence" value="ECO:0007669"/>
    <property type="project" value="UniProtKB-UniRule"/>
</dbReference>
<dbReference type="GO" id="GO:0003899">
    <property type="term" value="F:DNA-directed RNA polymerase activity"/>
    <property type="evidence" value="ECO:0007669"/>
    <property type="project" value="UniProtKB-UniRule"/>
</dbReference>
<dbReference type="GO" id="GO:0008270">
    <property type="term" value="F:zinc ion binding"/>
    <property type="evidence" value="ECO:0007669"/>
    <property type="project" value="UniProtKB-UniRule"/>
</dbReference>
<dbReference type="GO" id="GO:0006351">
    <property type="term" value="P:DNA-templated transcription"/>
    <property type="evidence" value="ECO:0007669"/>
    <property type="project" value="UniProtKB-UniRule"/>
</dbReference>
<dbReference type="CDD" id="cd02655">
    <property type="entry name" value="RNAP_beta'_C"/>
    <property type="match status" value="1"/>
</dbReference>
<dbReference type="FunFam" id="1.10.132.30:FF:000002">
    <property type="entry name" value="DNA-directed RNA polymerase subunit beta"/>
    <property type="match status" value="1"/>
</dbReference>
<dbReference type="FunFam" id="1.10.1790.20:FF:000002">
    <property type="entry name" value="DNA-directed RNA polymerase subunit beta"/>
    <property type="match status" value="1"/>
</dbReference>
<dbReference type="FunFam" id="1.10.274.100:FF:000011">
    <property type="entry name" value="DNA-directed RNA polymerase subunit beta"/>
    <property type="match status" value="1"/>
</dbReference>
<dbReference type="Gene3D" id="1.10.132.30">
    <property type="match status" value="1"/>
</dbReference>
<dbReference type="Gene3D" id="1.10.150.390">
    <property type="match status" value="1"/>
</dbReference>
<dbReference type="Gene3D" id="1.10.1790.20">
    <property type="match status" value="1"/>
</dbReference>
<dbReference type="Gene3D" id="1.10.274.100">
    <property type="entry name" value="RNA polymerase Rpb1, domain 3"/>
    <property type="match status" value="1"/>
</dbReference>
<dbReference type="HAMAP" id="MF_01324">
    <property type="entry name" value="RNApol_bact_RpoC2"/>
    <property type="match status" value="1"/>
</dbReference>
<dbReference type="InterPro" id="IPR012756">
    <property type="entry name" value="DNA-dir_RpoC2_beta_pp"/>
</dbReference>
<dbReference type="InterPro" id="IPR050254">
    <property type="entry name" value="RNA_pol_beta''_euk"/>
</dbReference>
<dbReference type="InterPro" id="IPR042102">
    <property type="entry name" value="RNA_pol_Rpb1_3_sf"/>
</dbReference>
<dbReference type="InterPro" id="IPR007083">
    <property type="entry name" value="RNA_pol_Rpb1_4"/>
</dbReference>
<dbReference type="InterPro" id="IPR007081">
    <property type="entry name" value="RNA_pol_Rpb1_5"/>
</dbReference>
<dbReference type="InterPro" id="IPR038120">
    <property type="entry name" value="Rpb1_funnel_sf"/>
</dbReference>
<dbReference type="NCBIfam" id="TIGR02388">
    <property type="entry name" value="rpoC2_cyan"/>
    <property type="match status" value="1"/>
</dbReference>
<dbReference type="PANTHER" id="PTHR34995">
    <property type="entry name" value="DNA-DIRECTED RNA POLYMERASE SUBUNIT BETA"/>
    <property type="match status" value="1"/>
</dbReference>
<dbReference type="PANTHER" id="PTHR34995:SF1">
    <property type="entry name" value="DNA-DIRECTED RNA POLYMERASE SUBUNIT BETA"/>
    <property type="match status" value="1"/>
</dbReference>
<dbReference type="Pfam" id="PF05000">
    <property type="entry name" value="RNA_pol_Rpb1_4"/>
    <property type="match status" value="1"/>
</dbReference>
<dbReference type="Pfam" id="PF04998">
    <property type="entry name" value="RNA_pol_Rpb1_5"/>
    <property type="match status" value="2"/>
</dbReference>
<dbReference type="SUPFAM" id="SSF64484">
    <property type="entry name" value="beta and beta-prime subunits of DNA dependent RNA-polymerase"/>
    <property type="match status" value="1"/>
</dbReference>
<keyword id="KW-0150">Chloroplast</keyword>
<keyword id="KW-0240">DNA-directed RNA polymerase</keyword>
<keyword id="KW-0479">Metal-binding</keyword>
<keyword id="KW-0548">Nucleotidyltransferase</keyword>
<keyword id="KW-0934">Plastid</keyword>
<keyword id="KW-0804">Transcription</keyword>
<keyword id="KW-0808">Transferase</keyword>
<keyword id="KW-0862">Zinc</keyword>
<reference key="1">
    <citation type="journal article" date="2006" name="BMC Genomics">
        <title>Complete plastid genome sequence of Daucus carota: implications for biotechnology and phylogeny of angiosperms.</title>
        <authorList>
            <person name="Ruhlman T."/>
            <person name="Lee S.-B."/>
            <person name="Jansen R.K."/>
            <person name="Hostetler J.B."/>
            <person name="Tallon L.J."/>
            <person name="Town C.D."/>
            <person name="Daniell H."/>
        </authorList>
    </citation>
    <scope>NUCLEOTIDE SEQUENCE [LARGE SCALE GENOMIC DNA]</scope>
    <source>
        <strain>cv. Danvers Half-long</strain>
    </source>
</reference>
<protein>
    <recommendedName>
        <fullName evidence="1">DNA-directed RNA polymerase subunit beta''</fullName>
        <ecNumber evidence="1">2.7.7.6</ecNumber>
    </recommendedName>
    <alternativeName>
        <fullName evidence="1">PEP</fullName>
    </alternativeName>
    <alternativeName>
        <fullName evidence="1">Plastid-encoded RNA polymerase subunit beta''</fullName>
        <shortName evidence="1">RNA polymerase subunit beta''</shortName>
    </alternativeName>
</protein>
<gene>
    <name evidence="1" type="primary">rpoC2</name>
</gene>
<sequence length="1390" mass="157778">MEVLMAERANLVFHNKVIDGTAMKRLISRLIDHFGMAYTSHILDQVKTLGFQQATATSISLGIDDLLTIPSKRWLVQDAEEQSFILEKHHHSGNVHAVEKLRQSIEIWYATSEFLRQEMNPNFRMTDPFNPVHIMSFSGARGNASQVHQLVGMRGLMSDPQGQMIDLPIQSNLREGLSLTEYIISCYGARKGVVDTAVRTSDAGYLTRRLVEVVQHIVVRRKDCGTARGISVSLGNGMMSENIFIQTLIGRVLADDIYMGTRCIATRNQDIGSGLVNQFITFRAQPIYIRTPFTCRSTSWICQLCYGRSPTHGDLVELGEAVGIIAGQSIGEPGTQLTLRTFHTGGVFTGGIAEHVRAPSNGKIKFNEDLVHPTRTRHGHPAFVCSIDLYVTIESEDILHNVNIPPKSFLLVQNDQYVESEQVIAEIRAGTSTLNFKEKVRKHIYSDSEGEMHWNTDVYHAPEFTYGNVHLLPKTSHLWILLGEPRRSDLISLSIHKDQDQMNARSFSVKKRSISNLSVTNDQVRHKFFSSDFFGKKEEEHPDYSELNRIVRCNLRYPTIPYADYDLLAKRRRKRFIIPLQSIQERENELMPPSGISIEIPINGIFRINSILAFFDDPRYRRKSSGITKYGTIEVDPIAKKEDLIEYRGVKEFKPKYQIKVDRFFFIPEEMHILPGSSSIMVRNNSIIGIDTQIALTTRSRVGGLVRVEIKKKRIELKIFSGDIHFPGETDKISRHSGVLIPPGTGKTNSKESKKGKNWIYVQRITPTNKKYFVLVRPVVTYEITDGINLVRLFPPDLLQEMDNVQLRVVNYILYGNGKPIREIYNTSIQLVRTCLVLNCTQDKKSSYIEETRTSFVEIGINGLSRDFIKIDLVKSPISYTAKRNDPSRSGLIYENGSDCTNINPFSSRFFYYSNARIKESLNQNQGTIHTLFNRNKEYQSLIILSSSNCFRMGPFNNVKYHNVIKESIKKDPPIPIRNLLGPLGTALKTANFYPFSHLITYNQILVINYLQLDNLKQTFQVIKYFLMDEIGKIYNYDLCSNIILNPFNLNWYFLQHNYCEGMSTIMSLGQFICENVCIAKNGPHLKSGQVLIVKMDSVVIRSAKPYLATPGATVHGHYGEILYEGDTLVTFIYEKSRSGDITQGLPKVEQVLEVRSIDSISMNLEKRVEGWHECITRTLGIPWGFLIGAELTIVQSRIALVNKIQKVYRSQGVQIHNRHIEIIVRQITSKVLVSEDGMSNVFLPGELIGLLRAERMGRALEEAICYRAVLLGITKASLNTQSFISEASFQETARVLAKAALRGRIDWLKGLKENVVLGGMIPVGTGFEGLVHSSRQHTNLSLETKNNNIFEGEMRDILFHHRKFFDSCFSKNFHDTSEQSFIGIGFNDS</sequence>